<protein>
    <recommendedName>
        <fullName>RNA-directed RNA polymerase L</fullName>
        <shortName>Protein L</shortName>
        <ecNumber evidence="11">2.7.7.48</ecNumber>
    </recommendedName>
    <alternativeName>
        <fullName>Large structural protein</fullName>
    </alternativeName>
    <alternativeName>
        <fullName>Replicase</fullName>
    </alternativeName>
    <alternativeName>
        <fullName>Transcriptase</fullName>
    </alternativeName>
    <domain>
        <recommendedName>
            <fullName>cap-snatching endonuclease</fullName>
            <ecNumber evidence="9 11">3.1.-.-</ecNumber>
        </recommendedName>
    </domain>
</protein>
<comment type="function">
    <text evidence="2 4 9 11">RNA-dependent RNA polymerase, which is responsible for the replication and transcription of the viral RNA genome using antigenomic RNA as an intermediate (By similarity). During transcription, synthesizes subgenomic RNAs and assures their capping by a cap-snatching mechanism, which involves the endonuclease activity cleaving the host capped pre-mRNAs (PubMed:31914382). These short capped RNAs are then used as primers for viral transcription. The 3'-end of subgenomic mRNAs molecules are not polyadenylated. During replication, the polymerase binds the 5' and 3' vRNA extremities at distinct sites (PubMed:32313945). In turn, significant conformational changes occur in the polymerase and in vRNA to initiate active RNA synthesis (By similarity). As a consequence of the use of the same enzyme for both transcription and replication, these mechanisms need to be well coordinated (By similarity).</text>
</comment>
<comment type="catalytic activity">
    <reaction evidence="5 11">
        <text>RNA(n) + a ribonucleoside 5'-triphosphate = RNA(n+1) + diphosphate</text>
        <dbReference type="Rhea" id="RHEA:21248"/>
        <dbReference type="Rhea" id="RHEA-COMP:14527"/>
        <dbReference type="Rhea" id="RHEA-COMP:17342"/>
        <dbReference type="ChEBI" id="CHEBI:33019"/>
        <dbReference type="ChEBI" id="CHEBI:61557"/>
        <dbReference type="ChEBI" id="CHEBI:140395"/>
        <dbReference type="EC" id="2.7.7.48"/>
    </reaction>
</comment>
<comment type="cofactor">
    <cofactor>
        <name>Mn(2+)</name>
        <dbReference type="ChEBI" id="CHEBI:29035"/>
    </cofactor>
    <text evidence="9 10">For endonuclease activity. Binds 2 Mn(2+) ions in the active site (PubMed:31914382). The divalent metal ions are crucial for catalytic activity (PubMed:31948728).</text>
</comment>
<comment type="cofactor">
    <cofactor evidence="4">
        <name>Mg(2+)</name>
        <dbReference type="ChEBI" id="CHEBI:18420"/>
    </cofactor>
    <cofactor evidence="4">
        <name>Mn(2+)</name>
        <dbReference type="ChEBI" id="CHEBI:29035"/>
    </cofactor>
    <text evidence="4">For polymerase activity. Initiation activity is stronger in the presence of Mn(2+) than in the presence of Mg(2+).</text>
</comment>
<comment type="activity regulation">
    <text evidence="9">Inhibited by Baloxavir acid (BXA).</text>
</comment>
<comment type="subunit">
    <text evidence="4">Homomultimer (By similarity). Interacts with the glycoprotein N; this interaction allows efficient polymerase packaging into virus particles (By similarity). Interacts with nucleoprotein N (By similarity).</text>
</comment>
<comment type="subcellular location">
    <subcellularLocation>
        <location evidence="8">Host Golgi apparatus</location>
    </subcellularLocation>
    <subcellularLocation>
        <location evidence="8">Host endoplasmic reticulum</location>
    </subcellularLocation>
    <subcellularLocation>
        <location evidence="8">Host endoplasmic reticulum-Golgi intermediate compartment</location>
    </subcellularLocation>
    <subcellularLocation>
        <location evidence="3">Virion</location>
    </subcellularLocation>
</comment>
<comment type="domain">
    <text evidence="11 12">The N-terminus contains the endonuclease activity (endoN) (PubMed:32313945, PubMed:32341479). The central region contains the RdRp activity (PubMed:32313945, PubMed:32341479). The C-terminus contains the cap-binding region (PubMed:32313945, PubMed:32341479).</text>
</comment>
<comment type="miscellaneous">
    <text evidence="14">Classified as His(+) endonuclease since it has a histidine upstream of the active site that coordinates the first cation.</text>
</comment>
<comment type="similarity">
    <text evidence="15">Belongs to the Bunyavirales RNA polymerase family.</text>
</comment>
<accession>I0DF35</accession>
<accession>A0A125SZQ2</accession>
<accession>F1BV96</accession>
<proteinExistence type="evidence at protein level"/>
<sequence length="2084" mass="235406">MNLEVLCGRINVENGLSLGEPGLYDQIYDRPGLPDLDVTVDATGVTVDIGAVPDSASQLGSSINAGLITIQLSEAYKINHDFTFSGLSKTTDRRLSEVFPITHDGSDGMTPDVIHTRLDGTIVVVEFTTTRSHNIGGLEAAYRTKIEKYRDPISRRVDIMENPRVFFGVIVVSSGGVLSNMPLTQDEAEELMYRFCIANEIYTKARSMDADIELQKSEEELEAISRALSFFSLFEPNIERVEGTFPNSEIEMLEQFLSTPADVDFITKTLKAKEVEAYADLCDSHYLKPEKTIQERLEINRCEAIDKTQDLLAGLHARSNKQTSLNRGTVKLPPWLPKPSSESIDIKTDSGFGSLMDHGAYGELWAKCLLDVSLGNVEGVVSDPAKELDIAISDDPEKDTPKEAKITYRRFKPALSSSARQEFSLQGVEGKKWKRMAANQKKEKESHDALSPFLDVEDIGDFLTFNNLLADSRYGDESVQRAVSILLEKASAMQDTELTHALNDSFKRNLSSNVVQWSLWVSCLAQELASALKQHCRAGEFIIKKLKFWPIYVIIKPTKSSSHIFYSLGIRKADVTRRLTGRVFSETIDAGEWELTEFKSLKTCKLTNLVNLPCTMLNSIAFWREKLGVAPWLVRKPCSELREQVGLTFLISLEDKSKTEEIITLTRYTQMEGFVSPPMLPKPQKMLGKLDGPLRTKLQVYLLRKHLDCMVRIASQPFSLIPREGRVEWGGTFHAISGRSTNLENMVNSWYIGYYKNKEESTELNALGEMYKKIVEMEEDKPSSPEFLGWGDTDSPKKHEFSRSFLRAACSSLEREIAQRHGRQWKQNLEERVLREIGTKNILDLASMKATSNFSKDWELYSEVQTKEYHRSKLLEKMATLIEKGVMWYIDAVGQAWKAVLDDGCMRICLFKKNQHGGLREIYVMDANARLVQFGVETMARCVCELSPHETVANPRLKNSIIENHGLKSARSLGPGSININSSNDAKKWNQGHYTTKLALVLCWFMPAKFHRFIWAAISMFRRKKMMVDLRFLAHLSSKSESRSSDPFREAMTDAFHGNREVSWMDKGRTYIKTETGMMQGILHFTSSLLHSCVQSFYKSYFVSKLKEGYMGESISGVVDVIEGSDDSAIMISIRPKSDMDEVRSRFFVANLLHSVKFLNPLFGIYSSEKSTVNTVYCVEYNSEFHFHRHLVRPTLRWIAASHQISETEALASRQEDYSNLLTQCLEGGASFSLTYLIQCAQLLHHYMLLGLCLHPLFGTFMGMLISDPDPALGFFLMDNPAFAGGAGFRFNLWRACKTTDLGRKYAYYFNEIQGKTKGDEDYRALDATSGGTLSHSVMVYWGDRKKYQALLNRMGLPEDWVEQIDENPGVLYRRAANKKELLLKLAEKVHSPGVTSSLSKGHVVPRVVAAGVYLLSRHCFRFSSSIHGRGSTQKASLIKLLMMSSISAMKHGGSLNPNQERMLFPQAQEYDRVCTLLEEVEHLTGKFVVRERNIVRSRIDLFQEPVDLRCKAEDLVSEVWFGLKRTKLGPRLLKEEWDKLRASFAWLSTDPSETLRDGPFLSHVQFRNFIAHVDAKSRSVRLLGAPVKKSGGVTTISQVVRMNFFPGFSLEAEKSLDNQERLESISILKHVLFMVLNGPYTEEYKLEMIIEAFSTLVIPQPSEVIRKSRTMTLCLLSNYLSSRGGSILDQIERAQSGTLGGFSKPQKTFIRPGGGVGYKGKGVWTGVMEDTHVQILIDGDGTSNWLEEIRLSSDARLYDVIESIRRLCDDLGINNRVASAYRGHCMVRLSGFKIKPASRTDGCPVRIMERGFRIRELQNPDEVKMRVRGDILNLSVTIQEGRVMNILSYRPRDTDISESAAAYLWSNRDLFSFGKKEPSCSWICLKTLDNWAWSHASVLLANDRKTQGIDNRAMGNIFRDCLEGSLRKQGLMRSKLTEMVEKNVVPLTTQELVDILEEDIDFSDVIAVELSEGSLDIESIFDGAPILWSAEVEEFGEGVVAVSYSSKYYHLTLMDQAAITMCAIMGKEGCRGLLTEKRCMAAIREQVRPFLIFLQIPEDSISWVSDQFCDSRGLDEESTIMWG</sequence>
<organism>
    <name type="scientific">Dabie bandavirus</name>
    <name type="common">Severe fever with thrombocytopenia virus</name>
    <name type="synonym">Huaiyangshan banyangvirus</name>
    <dbReference type="NCBI Taxonomy" id="1003835"/>
    <lineage>
        <taxon>Viruses</taxon>
        <taxon>Riboviria</taxon>
        <taxon>Orthornavirae</taxon>
        <taxon>Negarnaviricota</taxon>
        <taxon>Polyploviricotina</taxon>
        <taxon>Ellioviricetes</taxon>
        <taxon>Bunyavirales</taxon>
        <taxon>Phenuiviridae</taxon>
        <taxon>Bandavirus</taxon>
        <taxon>Bandavirus dabieense</taxon>
    </lineage>
</organism>
<dbReference type="EC" id="2.7.7.48" evidence="11"/>
<dbReference type="EC" id="3.1.-.-" evidence="9 11"/>
<dbReference type="EMBL" id="JQ341188">
    <property type="protein sequence ID" value="AFH88226.1"/>
    <property type="molecule type" value="Genomic_RNA"/>
</dbReference>
<dbReference type="EMBL" id="HQ116417">
    <property type="protein sequence ID" value="ADX31993.1"/>
    <property type="molecule type" value="Viral_cRNA"/>
</dbReference>
<dbReference type="EMBL" id="AB983500">
    <property type="protein sequence ID" value="BAU51056.1"/>
    <property type="molecule type" value="Viral_cRNA"/>
</dbReference>
<dbReference type="PDB" id="6L42">
    <property type="method" value="EM"/>
    <property type="resolution" value="3.40 A"/>
    <property type="chains" value="A=1-2084"/>
</dbReference>
<dbReference type="PDB" id="6NTV">
    <property type="method" value="X-ray"/>
    <property type="resolution" value="2.40 A"/>
    <property type="chains" value="A/B/C=1-226"/>
</dbReference>
<dbReference type="PDB" id="6XYA">
    <property type="method" value="X-ray"/>
    <property type="resolution" value="1.35 A"/>
    <property type="chains" value="B=1695-1810"/>
</dbReference>
<dbReference type="PDB" id="6Y6K">
    <property type="method" value="EM"/>
    <property type="resolution" value="3.78 A"/>
    <property type="chains" value="A=1-2084"/>
</dbReference>
<dbReference type="PDB" id="7ALP">
    <property type="method" value="EM"/>
    <property type="resolution" value="3.40 A"/>
    <property type="chains" value="U=1-2084"/>
</dbReference>
<dbReference type="PDB" id="8R6U">
    <property type="method" value="EM"/>
    <property type="resolution" value="2.98 A"/>
    <property type="chains" value="A=1-2084"/>
</dbReference>
<dbReference type="PDB" id="8R6W">
    <property type="method" value="EM"/>
    <property type="resolution" value="3.35 A"/>
    <property type="chains" value="A=1-2084"/>
</dbReference>
<dbReference type="PDB" id="8R6Y">
    <property type="method" value="EM"/>
    <property type="resolution" value="3.40 A"/>
    <property type="chains" value="A=1-2084"/>
</dbReference>
<dbReference type="PDBsum" id="6L42"/>
<dbReference type="PDBsum" id="6NTV"/>
<dbReference type="PDBsum" id="6XYA"/>
<dbReference type="PDBsum" id="6Y6K"/>
<dbReference type="PDBsum" id="7ALP"/>
<dbReference type="PDBsum" id="8R6U"/>
<dbReference type="PDBsum" id="8R6W"/>
<dbReference type="PDBsum" id="8R6Y"/>
<dbReference type="EMDB" id="EMD-0828"/>
<dbReference type="EMDB" id="EMD-10706"/>
<dbReference type="SMR" id="I0DF35"/>
<dbReference type="Proteomes" id="UP000148607">
    <property type="component" value="Genome"/>
</dbReference>
<dbReference type="Proteomes" id="UP000168380">
    <property type="component" value="Genome"/>
</dbReference>
<dbReference type="Proteomes" id="UP001181605">
    <property type="component" value="Genome"/>
</dbReference>
<dbReference type="GO" id="GO:0044165">
    <property type="term" value="C:host cell endoplasmic reticulum"/>
    <property type="evidence" value="ECO:0007669"/>
    <property type="project" value="UniProtKB-SubCell"/>
</dbReference>
<dbReference type="GO" id="GO:0044172">
    <property type="term" value="C:host cell endoplasmic reticulum-Golgi intermediate compartment"/>
    <property type="evidence" value="ECO:0007669"/>
    <property type="project" value="UniProtKB-SubCell"/>
</dbReference>
<dbReference type="GO" id="GO:0044177">
    <property type="term" value="C:host cell Golgi apparatus"/>
    <property type="evidence" value="ECO:0007669"/>
    <property type="project" value="UniProtKB-SubCell"/>
</dbReference>
<dbReference type="GO" id="GO:0044423">
    <property type="term" value="C:virion component"/>
    <property type="evidence" value="ECO:0007669"/>
    <property type="project" value="UniProtKB-KW"/>
</dbReference>
<dbReference type="GO" id="GO:0016787">
    <property type="term" value="F:hydrolase activity"/>
    <property type="evidence" value="ECO:0007669"/>
    <property type="project" value="UniProtKB-KW"/>
</dbReference>
<dbReference type="GO" id="GO:0046872">
    <property type="term" value="F:metal ion binding"/>
    <property type="evidence" value="ECO:0007669"/>
    <property type="project" value="UniProtKB-KW"/>
</dbReference>
<dbReference type="GO" id="GO:0003968">
    <property type="term" value="F:RNA-directed RNA polymerase activity"/>
    <property type="evidence" value="ECO:0007669"/>
    <property type="project" value="UniProtKB-EC"/>
</dbReference>
<dbReference type="GO" id="GO:0006351">
    <property type="term" value="P:DNA-templated transcription"/>
    <property type="evidence" value="ECO:0007669"/>
    <property type="project" value="InterPro"/>
</dbReference>
<dbReference type="GO" id="GO:0039694">
    <property type="term" value="P:viral RNA genome replication"/>
    <property type="evidence" value="ECO:0007669"/>
    <property type="project" value="InterPro"/>
</dbReference>
<dbReference type="InterPro" id="IPR022531">
    <property type="entry name" value="L_PA-C-like"/>
</dbReference>
<dbReference type="InterPro" id="IPR029124">
    <property type="entry name" value="L_protein_N"/>
</dbReference>
<dbReference type="InterPro" id="IPR007099">
    <property type="entry name" value="RNA-dir_pol_NSvirus"/>
</dbReference>
<dbReference type="InterPro" id="IPR007322">
    <property type="entry name" value="RNA_pol_bunyavir"/>
</dbReference>
<dbReference type="Pfam" id="PF04196">
    <property type="entry name" value="Bunya_RdRp"/>
    <property type="match status" value="1"/>
</dbReference>
<dbReference type="Pfam" id="PF12603">
    <property type="entry name" value="L_PA-C-like"/>
    <property type="match status" value="1"/>
</dbReference>
<dbReference type="Pfam" id="PF15518">
    <property type="entry name" value="L_protein_N"/>
    <property type="match status" value="1"/>
</dbReference>
<dbReference type="PROSITE" id="PS50525">
    <property type="entry name" value="RDRP_SSRNA_NEG_SEG"/>
    <property type="match status" value="1"/>
</dbReference>
<keyword id="KW-0002">3D-structure</keyword>
<keyword id="KW-1038">Host endoplasmic reticulum</keyword>
<keyword id="KW-1040">Host Golgi apparatus</keyword>
<keyword id="KW-0378">Hydrolase</keyword>
<keyword id="KW-0460">Magnesium</keyword>
<keyword id="KW-0464">Manganese</keyword>
<keyword id="KW-0479">Metal-binding</keyword>
<keyword id="KW-0808">Transferase</keyword>
<keyword id="KW-0946">Virion</keyword>
<feature type="chain" id="PRO_0000456059" description="RNA-directed RNA polymerase L">
    <location>
        <begin position="1"/>
        <end position="2084"/>
    </location>
</feature>
<feature type="domain" description="RdRp catalytic" evidence="5">
    <location>
        <begin position="969"/>
        <end position="1172"/>
    </location>
</feature>
<feature type="region of interest" description="Endonuclease" evidence="11 12">
    <location>
        <begin position="20"/>
        <end position="221"/>
    </location>
</feature>
<feature type="region of interest" description="Cap-binding" evidence="11 12">
    <location>
        <begin position="1695"/>
        <end position="1810"/>
    </location>
</feature>
<feature type="active site" description="For endonuclease activity" evidence="13">
    <location>
        <position position="145"/>
    </location>
</feature>
<feature type="binding site" evidence="2">
    <location>
        <position position="80"/>
    </location>
    <ligand>
        <name>Mn(2+)</name>
        <dbReference type="ChEBI" id="CHEBI:29035"/>
        <label>1</label>
    </ligand>
</feature>
<feature type="binding site" evidence="2">
    <location>
        <position position="112"/>
    </location>
    <ligand>
        <name>Mn(2+)</name>
        <dbReference type="ChEBI" id="CHEBI:29035"/>
        <label>1</label>
    </ligand>
</feature>
<feature type="binding site" evidence="2">
    <location>
        <position position="112"/>
    </location>
    <ligand>
        <name>Mn(2+)</name>
        <dbReference type="ChEBI" id="CHEBI:29035"/>
        <label>2</label>
    </ligand>
</feature>
<feature type="binding site" evidence="2">
    <location>
        <position position="126"/>
    </location>
    <ligand>
        <name>Mn(2+)</name>
        <dbReference type="ChEBI" id="CHEBI:29035"/>
        <label>1</label>
    </ligand>
</feature>
<feature type="binding site" evidence="11 12">
    <location>
        <position position="1127"/>
    </location>
    <ligand>
        <name>Mg(2+)</name>
        <dbReference type="ChEBI" id="CHEBI:18420"/>
        <note>catalytic; for RdRp activity</note>
    </ligand>
</feature>
<feature type="site" description="Interaction with the cap substrate" evidence="1">
    <location>
        <position position="1703"/>
    </location>
</feature>
<feature type="site" description="Interaction with the cap substrate" evidence="1">
    <location>
        <position position="1707"/>
    </location>
</feature>
<feature type="site" description="Interaction with the cap substrate" evidence="1">
    <location>
        <position position="1719"/>
    </location>
</feature>
<feature type="site" description="Interaction with the cap substrate" evidence="1">
    <location>
        <position position="1772"/>
    </location>
</feature>
<feature type="sequence variant" description="In strain: SPL057A and Isolate AH12/China/2010." evidence="6 7">
    <original>T</original>
    <variation>S</variation>
    <location>
        <position position="128"/>
    </location>
</feature>
<feature type="sequence variant" description="In strain: SPL057A and Isolate AH12/China/2010." evidence="6 7">
    <original>E</original>
    <variation>K</variation>
    <location>
        <position position="251"/>
    </location>
</feature>
<feature type="sequence variant" description="In strain: SPL057A." evidence="7">
    <original>S</original>
    <variation>N</variation>
    <location>
        <position position="284"/>
    </location>
</feature>
<feature type="sequence variant" description="In strain: SPL057A." evidence="7">
    <original>A</original>
    <variation>S</variation>
    <location>
        <position position="317"/>
    </location>
</feature>
<feature type="sequence variant" description="In strain: SPL057A." evidence="7">
    <original>S</original>
    <variation>T</variation>
    <location>
        <position position="343"/>
    </location>
</feature>
<feature type="sequence variant" description="In strain: SPL057A." evidence="7">
    <original>KESHDA</original>
    <variation>RESHET</variation>
    <location>
        <begin position="444"/>
        <end position="449"/>
    </location>
</feature>
<feature type="sequence variant" description="In strain: Isolate AH12/China/2010." evidence="6">
    <original>DA</original>
    <variation>ET</variation>
    <location>
        <begin position="448"/>
        <end position="449"/>
    </location>
</feature>
<feature type="sequence variant" description="In strain: Isolate AH12/China/2010." evidence="6">
    <original>A</original>
    <variation>T</variation>
    <location>
        <position position="470"/>
    </location>
</feature>
<feature type="sequence variant" description="In strain: Isolate AH12/China/2010." evidence="6">
    <original>V</original>
    <variation>I</variation>
    <location>
        <position position="479"/>
    </location>
</feature>
<feature type="sequence variant" description="In strain: SPL057A." evidence="7">
    <original>I</original>
    <variation>V</variation>
    <location>
        <position position="570"/>
    </location>
</feature>
<feature type="sequence variant" description="In strain: SPL057A and Isolate AH12/China/2010." evidence="6 7">
    <original>E</original>
    <variation>D</variation>
    <location>
        <position position="586"/>
    </location>
</feature>
<feature type="sequence variant" description="In strain: Isolate AH12/China/2010." evidence="6">
    <original>E</original>
    <variation>D</variation>
    <location>
        <position position="1061"/>
    </location>
</feature>
<feature type="sequence variant" description="In strain: SPL057A." evidence="7">
    <original>K</original>
    <variation>R</variation>
    <location>
        <position position="1157"/>
    </location>
</feature>
<feature type="sequence variant" description="In strain: SPL057A." evidence="7">
    <original>T</original>
    <variation>S</variation>
    <location>
        <position position="1208"/>
    </location>
</feature>
<feature type="sequence variant" description="In strain: SPL057A." evidence="7">
    <original>T</original>
    <variation>A</variation>
    <location>
        <position position="1433"/>
    </location>
</feature>
<feature type="sequence variant" description="In strain: Isolate AH12/China/2010." evidence="6">
    <original>I</original>
    <variation>V</variation>
    <location>
        <position position="1711"/>
    </location>
</feature>
<feature type="mutagenesis site" description="Drastically decreased endonuclease activity." evidence="9">
    <original>H</original>
    <variation>A</variation>
    <location>
        <position position="80"/>
    </location>
</feature>
<feature type="mutagenesis site" description="Drastically decreased endonuclease activity." evidence="9">
    <original>D</original>
    <variation>A</variation>
    <location>
        <position position="92"/>
    </location>
</feature>
<feature type="mutagenesis site" description="Complete loss of endonclease activity." evidence="9 16">
    <original>D</original>
    <variation>A</variation>
    <location>
        <position position="112"/>
    </location>
</feature>
<feature type="mutagenesis site" description="Drastically decreased endonuclease activity." evidence="9">
    <original>E</original>
    <variation>A</variation>
    <location>
        <position position="126"/>
    </location>
</feature>
<feature type="mutagenesis site" description="Complete loss of polymerase activity." evidence="16">
    <original>D</original>
    <variation>A</variation>
    <location>
        <position position="1126"/>
    </location>
</feature>
<feature type="helix" evidence="22">
    <location>
        <begin position="3"/>
        <end position="7"/>
    </location>
</feature>
<feature type="strand" evidence="22">
    <location>
        <begin position="14"/>
        <end position="17"/>
    </location>
</feature>
<feature type="strand" evidence="22">
    <location>
        <begin position="22"/>
        <end position="25"/>
    </location>
</feature>
<feature type="strand" evidence="22">
    <location>
        <begin position="36"/>
        <end position="41"/>
    </location>
</feature>
<feature type="strand" evidence="22">
    <location>
        <begin position="44"/>
        <end position="49"/>
    </location>
</feature>
<feature type="turn" evidence="22">
    <location>
        <begin position="59"/>
        <end position="62"/>
    </location>
</feature>
<feature type="strand" evidence="22">
    <location>
        <begin position="66"/>
        <end position="71"/>
    </location>
</feature>
<feature type="helix" evidence="22">
    <location>
        <begin position="72"/>
        <end position="75"/>
    </location>
</feature>
<feature type="helix" evidence="22">
    <location>
        <begin position="78"/>
        <end position="83"/>
    </location>
</feature>
<feature type="turn" evidence="22">
    <location>
        <begin position="84"/>
        <end position="87"/>
    </location>
</feature>
<feature type="strand" evidence="21">
    <location>
        <begin position="91"/>
        <end position="93"/>
    </location>
</feature>
<feature type="helix" evidence="22">
    <location>
        <begin position="95"/>
        <end position="97"/>
    </location>
</feature>
<feature type="strand" evidence="26">
    <location>
        <begin position="103"/>
        <end position="105"/>
    </location>
</feature>
<feature type="helix" evidence="25">
    <location>
        <begin position="106"/>
        <end position="108"/>
    </location>
</feature>
<feature type="strand" evidence="22">
    <location>
        <begin position="112"/>
        <end position="116"/>
    </location>
</feature>
<feature type="strand" evidence="26">
    <location>
        <begin position="118"/>
        <end position="120"/>
    </location>
</feature>
<feature type="strand" evidence="22">
    <location>
        <begin position="122"/>
        <end position="129"/>
    </location>
</feature>
<feature type="helix" evidence="22">
    <location>
        <begin position="135"/>
        <end position="158"/>
    </location>
</feature>
<feature type="strand" evidence="22">
    <location>
        <begin position="160"/>
        <end position="162"/>
    </location>
</feature>
<feature type="strand" evidence="22">
    <location>
        <begin position="164"/>
        <end position="172"/>
    </location>
</feature>
<feature type="strand" evidence="22">
    <location>
        <begin position="174"/>
        <end position="181"/>
    </location>
</feature>
<feature type="helix" evidence="22">
    <location>
        <begin position="185"/>
        <end position="208"/>
    </location>
</feature>
<feature type="helix" evidence="22">
    <location>
        <begin position="211"/>
        <end position="223"/>
    </location>
</feature>
<feature type="helix" evidence="26">
    <location>
        <begin position="238"/>
        <end position="244"/>
    </location>
</feature>
<feature type="strand" evidence="26">
    <location>
        <begin position="245"/>
        <end position="247"/>
    </location>
</feature>
<feature type="helix" evidence="26">
    <location>
        <begin position="250"/>
        <end position="258"/>
    </location>
</feature>
<feature type="helix" evidence="26">
    <location>
        <begin position="263"/>
        <end position="284"/>
    </location>
</feature>
<feature type="helix" evidence="26">
    <location>
        <begin position="293"/>
        <end position="316"/>
    </location>
</feature>
<feature type="helix" evidence="26">
    <location>
        <begin position="351"/>
        <end position="354"/>
    </location>
</feature>
<feature type="helix" evidence="27">
    <location>
        <begin position="356"/>
        <end position="358"/>
    </location>
</feature>
<feature type="helix" evidence="26">
    <location>
        <begin position="360"/>
        <end position="374"/>
    </location>
</feature>
<feature type="helix" evidence="26">
    <location>
        <begin position="384"/>
        <end position="392"/>
    </location>
</feature>
<feature type="helix" evidence="21">
    <location>
        <begin position="403"/>
        <end position="405"/>
    </location>
</feature>
<feature type="strand" evidence="26">
    <location>
        <begin position="409"/>
        <end position="411"/>
    </location>
</feature>
<feature type="helix" evidence="26">
    <location>
        <begin position="417"/>
        <end position="424"/>
    </location>
</feature>
<feature type="turn" evidence="26">
    <location>
        <begin position="425"/>
        <end position="435"/>
    </location>
</feature>
<feature type="helix" evidence="26">
    <location>
        <begin position="437"/>
        <end position="445"/>
    </location>
</feature>
<feature type="helix" evidence="26">
    <location>
        <begin position="458"/>
        <end position="465"/>
    </location>
</feature>
<feature type="strand" evidence="21">
    <location>
        <begin position="467"/>
        <end position="470"/>
    </location>
</feature>
<feature type="strand" evidence="21">
    <location>
        <begin position="475"/>
        <end position="477"/>
    </location>
</feature>
<feature type="helix" evidence="26">
    <location>
        <begin position="478"/>
        <end position="490"/>
    </location>
</feature>
<feature type="helix" evidence="26">
    <location>
        <begin position="497"/>
        <end position="509"/>
    </location>
</feature>
<feature type="helix" evidence="26">
    <location>
        <begin position="513"/>
        <end position="531"/>
    </location>
</feature>
<feature type="strand" evidence="26">
    <location>
        <begin position="541"/>
        <end position="545"/>
    </location>
</feature>
<feature type="strand" evidence="26">
    <location>
        <begin position="547"/>
        <end position="549"/>
    </location>
</feature>
<feature type="strand" evidence="26">
    <location>
        <begin position="552"/>
        <end position="557"/>
    </location>
</feature>
<feature type="strand" evidence="26">
    <location>
        <begin position="560"/>
        <end position="562"/>
    </location>
</feature>
<feature type="strand" evidence="26">
    <location>
        <begin position="564"/>
        <end position="571"/>
    </location>
</feature>
<feature type="helix" evidence="26">
    <location>
        <begin position="572"/>
        <end position="574"/>
    </location>
</feature>
<feature type="strand" evidence="25">
    <location>
        <begin position="582"/>
        <end position="584"/>
    </location>
</feature>
<feature type="strand" evidence="28">
    <location>
        <begin position="588"/>
        <end position="590"/>
    </location>
</feature>
<feature type="strand" evidence="26">
    <location>
        <begin position="591"/>
        <end position="595"/>
    </location>
</feature>
<feature type="strand" evidence="26">
    <location>
        <begin position="599"/>
        <end position="601"/>
    </location>
</feature>
<feature type="helix" evidence="26">
    <location>
        <begin position="607"/>
        <end position="610"/>
    </location>
</feature>
<feature type="helix" evidence="26">
    <location>
        <begin position="612"/>
        <end position="626"/>
    </location>
</feature>
<feature type="strand" evidence="27">
    <location>
        <begin position="631"/>
        <end position="633"/>
    </location>
</feature>
<feature type="helix" evidence="26">
    <location>
        <begin position="640"/>
        <end position="654"/>
    </location>
</feature>
<feature type="helix" evidence="26">
    <location>
        <begin position="657"/>
        <end position="664"/>
    </location>
</feature>
<feature type="helix" evidence="26">
    <location>
        <begin position="666"/>
        <end position="670"/>
    </location>
</feature>
<feature type="helix" evidence="26">
    <location>
        <begin position="671"/>
        <end position="674"/>
    </location>
</feature>
<feature type="strand" evidence="21">
    <location>
        <begin position="677"/>
        <end position="679"/>
    </location>
</feature>
<feature type="helix" evidence="26">
    <location>
        <begin position="683"/>
        <end position="688"/>
    </location>
</feature>
<feature type="helix" evidence="26">
    <location>
        <begin position="697"/>
        <end position="715"/>
    </location>
</feature>
<feature type="strand" evidence="26">
    <location>
        <begin position="719"/>
        <end position="730"/>
    </location>
</feature>
<feature type="turn" evidence="26">
    <location>
        <begin position="735"/>
        <end position="737"/>
    </location>
</feature>
<feature type="helix" evidence="26">
    <location>
        <begin position="743"/>
        <end position="748"/>
    </location>
</feature>
<feature type="helix" evidence="26">
    <location>
        <begin position="749"/>
        <end position="755"/>
    </location>
</feature>
<feature type="helix" evidence="26">
    <location>
        <begin position="764"/>
        <end position="766"/>
    </location>
</feature>
<feature type="helix" evidence="26">
    <location>
        <begin position="768"/>
        <end position="775"/>
    </location>
</feature>
<feature type="helix" evidence="26">
    <location>
        <begin position="778"/>
        <end position="780"/>
    </location>
</feature>
<feature type="turn" evidence="26">
    <location>
        <begin position="786"/>
        <end position="790"/>
    </location>
</feature>
<feature type="helix" evidence="26">
    <location>
        <begin position="803"/>
        <end position="821"/>
    </location>
</feature>
<feature type="helix" evidence="26">
    <location>
        <begin position="825"/>
        <end position="838"/>
    </location>
</feature>
<feature type="helix" evidence="26">
    <location>
        <begin position="842"/>
        <end position="845"/>
    </location>
</feature>
<feature type="strand" evidence="27">
    <location>
        <begin position="850"/>
        <end position="852"/>
    </location>
</feature>
<feature type="strand" evidence="26">
    <location>
        <begin position="858"/>
        <end position="860"/>
    </location>
</feature>
<feature type="helix" evidence="26">
    <location>
        <begin position="861"/>
        <end position="864"/>
    </location>
</feature>
<feature type="helix" evidence="26">
    <location>
        <begin position="874"/>
        <end position="884"/>
    </location>
</feature>
<feature type="helix" evidence="26">
    <location>
        <begin position="890"/>
        <end position="902"/>
    </location>
</feature>
<feature type="strand" evidence="25">
    <location>
        <begin position="903"/>
        <end position="905"/>
    </location>
</feature>
<feature type="strand" evidence="26">
    <location>
        <begin position="908"/>
        <end position="912"/>
    </location>
</feature>
<feature type="strand" evidence="26">
    <location>
        <begin position="916"/>
        <end position="918"/>
    </location>
</feature>
<feature type="strand" evidence="26">
    <location>
        <begin position="921"/>
        <end position="924"/>
    </location>
</feature>
<feature type="helix" evidence="26">
    <location>
        <begin position="927"/>
        <end position="944"/>
    </location>
</feature>
<feature type="strand" evidence="21">
    <location>
        <begin position="947"/>
        <end position="949"/>
    </location>
</feature>
<feature type="strand" evidence="26">
    <location>
        <begin position="950"/>
        <end position="953"/>
    </location>
</feature>
<feature type="helix" evidence="26">
    <location>
        <begin position="957"/>
        <end position="973"/>
    </location>
</feature>
<feature type="strand" evidence="26">
    <location>
        <begin position="978"/>
        <end position="988"/>
    </location>
</feature>
<feature type="helix" evidence="26">
    <location>
        <begin position="989"/>
        <end position="992"/>
    </location>
</feature>
<feature type="helix" evidence="26">
    <location>
        <begin position="995"/>
        <end position="1004"/>
    </location>
</feature>
<feature type="strand" evidence="26">
    <location>
        <begin position="1008"/>
        <end position="1010"/>
    </location>
</feature>
<feature type="helix" evidence="26">
    <location>
        <begin position="1011"/>
        <end position="1019"/>
    </location>
</feature>
<feature type="helix" evidence="26">
    <location>
        <begin position="1020"/>
        <end position="1022"/>
    </location>
</feature>
<feature type="strand" evidence="26">
    <location>
        <begin position="1023"/>
        <end position="1027"/>
    </location>
</feature>
<feature type="helix" evidence="26">
    <location>
        <begin position="1030"/>
        <end position="1038"/>
    </location>
</feature>
<feature type="helix" evidence="26">
    <location>
        <begin position="1047"/>
        <end position="1057"/>
    </location>
</feature>
<feature type="strand" evidence="21">
    <location>
        <begin position="1063"/>
        <end position="1065"/>
    </location>
</feature>
<feature type="strand" evidence="26">
    <location>
        <begin position="1069"/>
        <end position="1074"/>
    </location>
</feature>
<feature type="turn" evidence="26">
    <location>
        <begin position="1080"/>
        <end position="1083"/>
    </location>
</feature>
<feature type="helix" evidence="26">
    <location>
        <begin position="1084"/>
        <end position="1107"/>
    </location>
</feature>
<feature type="helix" evidence="26">
    <location>
        <begin position="1110"/>
        <end position="1112"/>
    </location>
</feature>
<feature type="strand" evidence="26">
    <location>
        <begin position="1117"/>
        <end position="1123"/>
    </location>
</feature>
<feature type="strand" evidence="26">
    <location>
        <begin position="1125"/>
        <end position="1134"/>
    </location>
</feature>
<feature type="helix" evidence="26">
    <location>
        <begin position="1139"/>
        <end position="1154"/>
    </location>
</feature>
<feature type="helix" evidence="26">
    <location>
        <begin position="1156"/>
        <end position="1159"/>
    </location>
</feature>
<feature type="helix" evidence="26">
    <location>
        <begin position="1160"/>
        <end position="1163"/>
    </location>
</feature>
<feature type="strand" evidence="26">
    <location>
        <begin position="1172"/>
        <end position="1183"/>
    </location>
</feature>
<feature type="strand" evidence="26">
    <location>
        <begin position="1185"/>
        <end position="1187"/>
    </location>
</feature>
<feature type="strand" evidence="26">
    <location>
        <begin position="1190"/>
        <end position="1192"/>
    </location>
</feature>
<feature type="helix" evidence="26">
    <location>
        <begin position="1195"/>
        <end position="1199"/>
    </location>
</feature>
<feature type="turn" evidence="26">
    <location>
        <begin position="1200"/>
        <end position="1203"/>
    </location>
</feature>
<feature type="helix" evidence="26">
    <location>
        <begin position="1211"/>
        <end position="1213"/>
    </location>
</feature>
<feature type="helix" evidence="26">
    <location>
        <begin position="1214"/>
        <end position="1227"/>
    </location>
</feature>
<feature type="helix" evidence="26">
    <location>
        <begin position="1232"/>
        <end position="1249"/>
    </location>
</feature>
<feature type="turn" evidence="26">
    <location>
        <begin position="1250"/>
        <end position="1254"/>
    </location>
</feature>
<feature type="helix" evidence="26">
    <location>
        <begin position="1258"/>
        <end position="1265"/>
    </location>
</feature>
<feature type="turn" evidence="26">
    <location>
        <begin position="1271"/>
        <end position="1274"/>
    </location>
</feature>
<feature type="strand" evidence="26">
    <location>
        <begin position="1283"/>
        <end position="1287"/>
    </location>
</feature>
<feature type="helix" evidence="26">
    <location>
        <begin position="1289"/>
        <end position="1296"/>
    </location>
</feature>
<feature type="turn" evidence="26">
    <location>
        <begin position="1297"/>
        <end position="1299"/>
    </location>
</feature>
<feature type="helix" evidence="26">
    <location>
        <begin position="1303"/>
        <end position="1314"/>
    </location>
</feature>
<feature type="helix" evidence="25">
    <location>
        <begin position="1316"/>
        <end position="1318"/>
    </location>
</feature>
<feature type="strand" evidence="25">
    <location>
        <begin position="1320"/>
        <end position="1323"/>
    </location>
</feature>
<feature type="turn" evidence="27">
    <location>
        <begin position="1330"/>
        <end position="1332"/>
    </location>
</feature>
<feature type="strand" evidence="21">
    <location>
        <begin position="1333"/>
        <end position="1335"/>
    </location>
</feature>
<feature type="strand" evidence="26">
    <location>
        <begin position="1338"/>
        <end position="1340"/>
    </location>
</feature>
<feature type="helix" evidence="26">
    <location>
        <begin position="1346"/>
        <end position="1355"/>
    </location>
</feature>
<feature type="helix" evidence="26">
    <location>
        <begin position="1361"/>
        <end position="1367"/>
    </location>
</feature>
<feature type="helix" evidence="26">
    <location>
        <begin position="1369"/>
        <end position="1372"/>
    </location>
</feature>
<feature type="helix" evidence="26">
    <location>
        <begin position="1379"/>
        <end position="1389"/>
    </location>
</feature>
<feature type="helix" evidence="26">
    <location>
        <begin position="1393"/>
        <end position="1396"/>
    </location>
</feature>
<feature type="helix" evidence="26">
    <location>
        <begin position="1404"/>
        <end position="1410"/>
    </location>
</feature>
<feature type="strand" evidence="26">
    <location>
        <begin position="1413"/>
        <end position="1419"/>
    </location>
</feature>
<feature type="strand" evidence="26">
    <location>
        <begin position="1421"/>
        <end position="1423"/>
    </location>
</feature>
<feature type="helix" evidence="26">
    <location>
        <begin position="1438"/>
        <end position="1447"/>
    </location>
</feature>
<feature type="helix" evidence="26">
    <location>
        <begin position="1448"/>
        <end position="1450"/>
    </location>
</feature>
<feature type="helix" evidence="21">
    <location>
        <begin position="1452"/>
        <end position="1456"/>
    </location>
</feature>
<feature type="helix" evidence="26">
    <location>
        <begin position="1458"/>
        <end position="1464"/>
    </location>
</feature>
<feature type="turn" evidence="26">
    <location>
        <begin position="1466"/>
        <end position="1469"/>
    </location>
</feature>
<feature type="helix" evidence="26">
    <location>
        <begin position="1470"/>
        <end position="1477"/>
    </location>
</feature>
<feature type="strand" evidence="26">
    <location>
        <begin position="1486"/>
        <end position="1488"/>
    </location>
</feature>
<feature type="strand" evidence="26">
    <location>
        <begin position="1495"/>
        <end position="1503"/>
    </location>
</feature>
<feature type="helix" evidence="26">
    <location>
        <begin position="1513"/>
        <end position="1521"/>
    </location>
</feature>
<feature type="helix" evidence="26">
    <location>
        <begin position="1535"/>
        <end position="1545"/>
    </location>
</feature>
<feature type="helix" evidence="26">
    <location>
        <begin position="1552"/>
        <end position="1558"/>
    </location>
</feature>
<feature type="helix" evidence="26">
    <location>
        <begin position="1564"/>
        <end position="1574"/>
    </location>
</feature>
<feature type="strand" evidence="26">
    <location>
        <begin position="1579"/>
        <end position="1586"/>
    </location>
</feature>
<feature type="helix" evidence="26">
    <location>
        <begin position="1595"/>
        <end position="1603"/>
    </location>
</feature>
<feature type="strand" evidence="26">
    <location>
        <begin position="1609"/>
        <end position="1611"/>
    </location>
</feature>
<feature type="helix" evidence="28">
    <location>
        <begin position="1617"/>
        <end position="1623"/>
    </location>
</feature>
<feature type="helix" evidence="27">
    <location>
        <begin position="1626"/>
        <end position="1637"/>
    </location>
</feature>
<feature type="strand" evidence="27">
    <location>
        <begin position="1638"/>
        <end position="1640"/>
    </location>
</feature>
<feature type="helix" evidence="27">
    <location>
        <begin position="1643"/>
        <end position="1656"/>
    </location>
</feature>
<feature type="strand" evidence="25">
    <location>
        <begin position="1662"/>
        <end position="1664"/>
    </location>
</feature>
<feature type="helix" evidence="27">
    <location>
        <begin position="1671"/>
        <end position="1682"/>
    </location>
</feature>
<feature type="helix" evidence="27">
    <location>
        <begin position="1688"/>
        <end position="1695"/>
    </location>
</feature>
<feature type="turn" evidence="27">
    <location>
        <begin position="1696"/>
        <end position="1698"/>
    </location>
</feature>
<feature type="strand" evidence="23">
    <location>
        <begin position="1700"/>
        <end position="1705"/>
    </location>
</feature>
<feature type="strand" evidence="23">
    <location>
        <begin position="1708"/>
        <end position="1711"/>
    </location>
</feature>
<feature type="turn" evidence="21">
    <location>
        <begin position="1713"/>
        <end position="1715"/>
    </location>
</feature>
<feature type="strand" evidence="23">
    <location>
        <begin position="1717"/>
        <end position="1721"/>
    </location>
</feature>
<feature type="strand" evidence="23">
    <location>
        <begin position="1723"/>
        <end position="1729"/>
    </location>
</feature>
<feature type="strand" evidence="23">
    <location>
        <begin position="1732"/>
        <end position="1740"/>
    </location>
</feature>
<feature type="strand" evidence="21">
    <location>
        <begin position="1741"/>
        <end position="1744"/>
    </location>
</feature>
<feature type="strand" evidence="23">
    <location>
        <begin position="1745"/>
        <end position="1753"/>
    </location>
</feature>
<feature type="helix" evidence="23">
    <location>
        <begin position="1758"/>
        <end position="1772"/>
    </location>
</feature>
<feature type="strand" evidence="23">
    <location>
        <begin position="1774"/>
        <end position="1776"/>
    </location>
</feature>
<feature type="strand" evidence="23">
    <location>
        <begin position="1787"/>
        <end position="1791"/>
    </location>
</feature>
<feature type="strand" evidence="23">
    <location>
        <begin position="1794"/>
        <end position="1797"/>
    </location>
</feature>
<feature type="helix" evidence="21">
    <location>
        <begin position="1798"/>
        <end position="1800"/>
    </location>
</feature>
<feature type="strand" evidence="23">
    <location>
        <begin position="1802"/>
        <end position="1808"/>
    </location>
</feature>
<feature type="helix" evidence="28">
    <location>
        <begin position="1821"/>
        <end position="1823"/>
    </location>
</feature>
<feature type="strand" evidence="21">
    <location>
        <begin position="1825"/>
        <end position="1829"/>
    </location>
</feature>
<feature type="strand" evidence="21">
    <location>
        <begin position="1832"/>
        <end position="1840"/>
    </location>
</feature>
<feature type="strand" evidence="21">
    <location>
        <begin position="1843"/>
        <end position="1850"/>
    </location>
</feature>
<feature type="helix" evidence="27">
    <location>
        <begin position="1859"/>
        <end position="1867"/>
    </location>
</feature>
<feature type="helix" evidence="27">
    <location>
        <begin position="1869"/>
        <end position="1871"/>
    </location>
</feature>
<feature type="strand" evidence="27">
    <location>
        <begin position="1872"/>
        <end position="1876"/>
    </location>
</feature>
<feature type="turn" evidence="27">
    <location>
        <begin position="1882"/>
        <end position="1886"/>
    </location>
</feature>
<feature type="helix" evidence="27">
    <location>
        <begin position="1891"/>
        <end position="1901"/>
    </location>
</feature>
<feature type="strand" evidence="27">
    <location>
        <begin position="1902"/>
        <end position="1904"/>
    </location>
</feature>
<feature type="turn" evidence="25">
    <location>
        <begin position="1906"/>
        <end position="1908"/>
    </location>
</feature>
<feature type="helix" evidence="27">
    <location>
        <begin position="1914"/>
        <end position="1930"/>
    </location>
</feature>
<feature type="strand" evidence="27">
    <location>
        <begin position="1931"/>
        <end position="1933"/>
    </location>
</feature>
<feature type="helix" evidence="21">
    <location>
        <begin position="1937"/>
        <end position="1940"/>
    </location>
</feature>
<feature type="helix" evidence="25">
    <location>
        <begin position="1953"/>
        <end position="1956"/>
    </location>
</feature>
<feature type="strand" evidence="21">
    <location>
        <begin position="1957"/>
        <end position="1961"/>
    </location>
</feature>
<feature type="strand" evidence="21">
    <location>
        <begin position="1970"/>
        <end position="1972"/>
    </location>
</feature>
<feature type="strand" evidence="27">
    <location>
        <begin position="1975"/>
        <end position="1979"/>
    </location>
</feature>
<feature type="helix" evidence="27">
    <location>
        <begin position="1980"/>
        <end position="1982"/>
    </location>
</feature>
<feature type="turn" evidence="27">
    <location>
        <begin position="1989"/>
        <end position="1992"/>
    </location>
</feature>
<feature type="helix" evidence="27">
    <location>
        <begin position="1998"/>
        <end position="2003"/>
    </location>
</feature>
<feature type="turn" evidence="21">
    <location>
        <begin position="2010"/>
        <end position="2012"/>
    </location>
</feature>
<feature type="strand" evidence="27">
    <location>
        <begin position="2014"/>
        <end position="2016"/>
    </location>
</feature>
<feature type="helix" evidence="27">
    <location>
        <begin position="2017"/>
        <end position="2026"/>
    </location>
</feature>
<feature type="turn" evidence="27">
    <location>
        <begin position="2027"/>
        <end position="2031"/>
    </location>
</feature>
<feature type="helix" evidence="27">
    <location>
        <begin position="2032"/>
        <end position="2036"/>
    </location>
</feature>
<feature type="strand" evidence="27">
    <location>
        <begin position="2040"/>
        <end position="2042"/>
    </location>
</feature>
<feature type="helix" evidence="27">
    <location>
        <begin position="2045"/>
        <end position="2047"/>
    </location>
</feature>
<feature type="helix" evidence="27">
    <location>
        <begin position="2049"/>
        <end position="2053"/>
    </location>
</feature>
<feature type="helix" evidence="25">
    <location>
        <begin position="2061"/>
        <end position="2067"/>
    </location>
</feature>
<name>L_SFTS</name>
<reference key="1">
    <citation type="journal article" date="2011" name="N. Engl. J. Med.">
        <title>Fever with thrombocytopenia associated with a novel bunyavirus in China.</title>
        <authorList>
            <person name="Yu X.J."/>
            <person name="Liang M.F."/>
            <person name="Zhang S.Y."/>
            <person name="Liu Y."/>
            <person name="Li J.D."/>
            <person name="Sun Y.L."/>
            <person name="Zhang L."/>
            <person name="Zhang Q.F."/>
            <person name="Popov V.L."/>
            <person name="Li C."/>
            <person name="Qu J."/>
            <person name="Li Q."/>
            <person name="Zhang Y.P."/>
            <person name="Hai R."/>
            <person name="Wu W."/>
            <person name="Wang Q."/>
            <person name="Zhan F.X."/>
            <person name="Wang X.J."/>
            <person name="Kan B."/>
            <person name="Wang S.W."/>
            <person name="Wan K.L."/>
            <person name="Jing H.Q."/>
            <person name="Lu J.X."/>
            <person name="Yin W.W."/>
            <person name="Zhou H."/>
            <person name="Guan X.H."/>
            <person name="Liu J.F."/>
            <person name="Bi Z.Q."/>
            <person name="Liu G.H."/>
            <person name="Ren J."/>
            <person name="Wang H."/>
            <person name="Zhao Z."/>
            <person name="Song J.D."/>
            <person name="He J.R."/>
            <person name="Wan T."/>
            <person name="Zhang J.S."/>
            <person name="Fu X.P."/>
            <person name="Sun L.N."/>
            <person name="Dong X.P."/>
            <person name="Feng Z.J."/>
            <person name="Yang W.Z."/>
            <person name="Hong T."/>
            <person name="Zhang Y."/>
            <person name="Walker D.H."/>
            <person name="Wang Y."/>
            <person name="Li D.X."/>
        </authorList>
    </citation>
    <scope>NUCLEOTIDE SEQUENCE [GENOMIC RNA]</scope>
    <source>
        <strain>Isolate AH12/China/2010</strain>
    </source>
</reference>
<reference key="2">
    <citation type="submission" date="2011-12" db="EMBL/GenBank/DDBJ databases">
        <title>Novel Bunyavirus Infection in China: Preliminary Clinical Characteristics and Treatment Effects.</title>
        <authorList>
            <person name="Liu W."/>
            <person name="Zhuang L."/>
        </authorList>
    </citation>
    <scope>NUCLEOTIDE SEQUENCE [GENOMIC RNA]</scope>
    <source>
        <strain>WCH/97/HN/China/2011</strain>
    </source>
</reference>
<reference key="3">
    <citation type="journal article" date="2015" name="J. Infect. Dis.">
        <title>Phylogenetic and Geographic Relationships of Severe Fever With Thrombocytopenia Syndrome Virus in China, South Korea, and Japan.</title>
        <authorList>
            <person name="Yoshikawa T."/>
            <person name="Shimojima M."/>
            <person name="Fukushi S."/>
            <person name="Tani H."/>
            <person name="Fukuma A."/>
            <person name="Taniguchi S."/>
            <person name="Singh H."/>
            <person name="Suda Y."/>
            <person name="Shirabe K."/>
            <person name="Toda S."/>
            <person name="Shimazu Y."/>
            <person name="Nomachi T."/>
            <person name="Gokuden M."/>
            <person name="Morimitsu T."/>
            <person name="Ando K."/>
            <person name="Yoshikawa A."/>
            <person name="Kan M."/>
            <person name="Uramoto M."/>
            <person name="Osako H."/>
            <person name="Kida K."/>
            <person name="Takimoto H."/>
            <person name="Kitamoto H."/>
            <person name="Terasoma F."/>
            <person name="Honda A."/>
            <person name="Maeda K."/>
            <person name="Takahashi T."/>
            <person name="Yamagishi T."/>
            <person name="Oishi K."/>
            <person name="Morikawa S."/>
            <person name="Saijo M."/>
        </authorList>
    </citation>
    <scope>NUCLEOTIDE SEQUENCE [GENOMIC RNA]</scope>
    <source>
        <strain evidence="17">SPL057A</strain>
    </source>
</reference>
<reference key="4">
    <citation type="journal article" date="2017" name="Crit. Rev. Microbiol.">
        <title>Bunyaviridae RdRps: structure, motifs, and RNA synthesis machinery.</title>
        <authorList>
            <person name="Amroun A."/>
            <person name="Priet S."/>
            <person name="de Lamballerie X."/>
            <person name="Querat G."/>
        </authorList>
    </citation>
    <scope>REVIEW</scope>
</reference>
<reference key="5">
    <citation type="journal article" date="2018" name="Biomed. Res.">
        <title>Targeting of severe fever with thrombocytopenia syndrome virus structural proteins to the ERGIC (endoplasmic reticulum Golgi intermediate compartment) and Golgi complex.</title>
        <authorList>
            <person name="Lundu T."/>
            <person name="Tsuda Y."/>
            <person name="Ito R."/>
            <person name="Shimizu K."/>
            <person name="Kobayashi S."/>
            <person name="Yoshii K."/>
            <person name="Yoshimatsu K."/>
            <person name="Arikawa J."/>
            <person name="Kariwa H."/>
        </authorList>
    </citation>
    <scope>SUBCELLULAR LOCATION</scope>
    <source>
        <strain>YG1</strain>
    </source>
</reference>
<reference key="6">
    <citation type="journal article" date="2020" name="Trends Microbiol.">
        <title>The Cap-Snatching Mechanism of Bunyaviruses.</title>
        <authorList>
            <person name="Olschewski S."/>
            <person name="Cusack S."/>
            <person name="Rosenthal M."/>
        </authorList>
    </citation>
    <scope>REVIEW</scope>
</reference>
<reference evidence="23 24" key="7">
    <citation type="journal article" date="2020" name="Nucleic Acids Res.">
        <title>Structural and functional characterization of the severe fever with thrombocytopenia syndrome virus L protein.</title>
        <authorList>
            <person name="Vogel D."/>
            <person name="Thorkelsson S.R."/>
            <person name="Quemin E.R.J."/>
            <person name="Meier K."/>
            <person name="Kouba T."/>
            <person name="Gogrefe N."/>
            <person name="Busch C."/>
            <person name="Reindl S."/>
            <person name="Gunther S."/>
            <person name="Cusack S."/>
            <person name="Grunewald K."/>
            <person name="Rosenthal M."/>
        </authorList>
    </citation>
    <scope>X-RAY CRYSTALLOGRAPHY (1.35 ANGSTROMS) OF 1695-1810 IN COMPLEX WITH MAGNESIUM</scope>
    <scope>DOMAIN</scope>
    <scope>CATALYTIC ACTIVITY</scope>
    <scope>MUTAGENESIS OF ASP-112 AND ASP-1126</scope>
    <scope>FUNCTION</scope>
    <source>
        <strain>Isolate AH12/China/2010</strain>
    </source>
</reference>
<reference evidence="18" key="8">
    <citation type="journal article" date="2020" name="Nat. Microbiol.">
        <title>Structure of severe fever with thrombocytopenia syndrome virus L protein elucidates the mechanisms of viral transcription initiation.</title>
        <authorList>
            <person name="Wang P."/>
            <person name="Liu L."/>
            <person name="Liu A."/>
            <person name="Yan L."/>
            <person name="He Y."/>
            <person name="Shen S."/>
            <person name="Hu M."/>
            <person name="Guo Y."/>
            <person name="Liu H."/>
            <person name="Liu C."/>
            <person name="Lu Y."/>
            <person name="Wang P."/>
            <person name="Deng F."/>
            <person name="Rao Z."/>
            <person name="Lou Z."/>
        </authorList>
    </citation>
    <scope>STRUCTURE BY ELECTRON MICROSCOPY (3.40 ANGSTROMS)</scope>
    <scope>DOMAIN</scope>
    <source>
        <strain>WCH/97/HN/China/2011</strain>
    </source>
</reference>
<reference evidence="19" key="9">
    <citation type="journal article" date="2020" name="Cell Rep.">
        <title>The Cap-Snatching SFTSV Endonuclease Domain Is an Antiviral Target.</title>
        <authorList>
            <person name="Wang W."/>
            <person name="Shin W.J."/>
            <person name="Zhang B."/>
            <person name="Choi Y."/>
            <person name="Yoo J.S."/>
            <person name="Zimmerman M.I."/>
            <person name="Frederick T.E."/>
            <person name="Bowman G.R."/>
            <person name="Gross M.L."/>
            <person name="Leung D.W."/>
            <person name="Jung J.U."/>
            <person name="Amarasinghe G.K."/>
        </authorList>
    </citation>
    <scope>X-RAY CRYSTALLOGRAPHY (2.40 ANGSTROMS) OF 1-226</scope>
    <scope>CATALYTIC ACTIVITY</scope>
    <scope>ACTIVITY REGULATION</scope>
    <scope>FUNCTION</scope>
    <scope>COFACTOR</scope>
    <scope>MUTAGENESIS OF HIS-80; ASP-92; ASP-112 AND GLU-126</scope>
</reference>
<reference evidence="20" key="10">
    <citation type="journal article" date="2021" name="Nat. Microbiol.">
        <title>Errors in the deposited SFTSV L protein structure.</title>
        <authorList>
            <person name="Cusack S."/>
            <person name="Rosenthal M."/>
        </authorList>
    </citation>
    <scope>STRUCTURE BY ELECTRON MICROSCOPY (3.40 ANGSTROMS)</scope>
</reference>
<reference key="11">
    <citation type="journal article" date="2021" name="Nat. Microbiol.">
        <title>Author Correction: Structure of severe fever with thrombocytopenia syndrome virus L protein elucidates the mechanisms of viral transcription initiation.</title>
        <authorList>
            <person name="Wang P."/>
            <person name="Liu L."/>
            <person name="Liu A."/>
            <person name="Yan L."/>
            <person name="He Y."/>
            <person name="Shen S."/>
            <person name="Hu M."/>
            <person name="Guo Y."/>
            <person name="Liu H."/>
            <person name="Liu C."/>
            <person name="Lu Y."/>
            <person name="Wang P."/>
            <person name="Deng F."/>
            <person name="Rao Z."/>
            <person name="Lou Z."/>
        </authorList>
    </citation>
    <scope>STRUCTURE REVISION</scope>
</reference>
<evidence type="ECO:0000250" key="1">
    <source>
        <dbReference type="UniProtKB" id="A2SZS3"/>
    </source>
</evidence>
<evidence type="ECO:0000250" key="2">
    <source>
        <dbReference type="UniProtKB" id="A5HC98"/>
    </source>
</evidence>
<evidence type="ECO:0000250" key="3">
    <source>
        <dbReference type="UniProtKB" id="P20470"/>
    </source>
</evidence>
<evidence type="ECO:0000250" key="4">
    <source>
        <dbReference type="UniProtKB" id="P27316"/>
    </source>
</evidence>
<evidence type="ECO:0000255" key="5">
    <source>
        <dbReference type="PROSITE-ProRule" id="PRU00539"/>
    </source>
</evidence>
<evidence type="ECO:0000269" key="6">
    <source>
    </source>
</evidence>
<evidence type="ECO:0000269" key="7">
    <source>
    </source>
</evidence>
<evidence type="ECO:0000269" key="8">
    <source>
    </source>
</evidence>
<evidence type="ECO:0000269" key="9">
    <source>
    </source>
</evidence>
<evidence type="ECO:0000269" key="10">
    <source>
    </source>
</evidence>
<evidence type="ECO:0000269" key="11">
    <source>
    </source>
</evidence>
<evidence type="ECO:0000269" key="12">
    <source>
    </source>
</evidence>
<evidence type="ECO:0000303" key="13">
    <source>
    </source>
</evidence>
<evidence type="ECO:0000303" key="14">
    <source>
    </source>
</evidence>
<evidence type="ECO:0000305" key="15"/>
<evidence type="ECO:0000305" key="16">
    <source>
    </source>
</evidence>
<evidence type="ECO:0000312" key="17">
    <source>
        <dbReference type="EMBL" id="BAU51056.1"/>
    </source>
</evidence>
<evidence type="ECO:0007744" key="18">
    <source>
        <dbReference type="PDB" id="6L42"/>
    </source>
</evidence>
<evidence type="ECO:0007744" key="19">
    <source>
        <dbReference type="PDB" id="6NTV"/>
    </source>
</evidence>
<evidence type="ECO:0007744" key="20">
    <source>
        <dbReference type="PDB" id="7ALP"/>
    </source>
</evidence>
<evidence type="ECO:0007829" key="21">
    <source>
        <dbReference type="PDB" id="6L42"/>
    </source>
</evidence>
<evidence type="ECO:0007829" key="22">
    <source>
        <dbReference type="PDB" id="6NTV"/>
    </source>
</evidence>
<evidence type="ECO:0007829" key="23">
    <source>
        <dbReference type="PDB" id="6XYA"/>
    </source>
</evidence>
<evidence type="ECO:0007829" key="24">
    <source>
        <dbReference type="PDB" id="6Y6K"/>
    </source>
</evidence>
<evidence type="ECO:0007829" key="25">
    <source>
        <dbReference type="PDB" id="7ALP"/>
    </source>
</evidence>
<evidence type="ECO:0007829" key="26">
    <source>
        <dbReference type="PDB" id="8R6U"/>
    </source>
</evidence>
<evidence type="ECO:0007829" key="27">
    <source>
        <dbReference type="PDB" id="8R6W"/>
    </source>
</evidence>
<evidence type="ECO:0007829" key="28">
    <source>
        <dbReference type="PDB" id="8R6Y"/>
    </source>
</evidence>